<evidence type="ECO:0000255" key="1">
    <source>
        <dbReference type="HAMAP-Rule" id="MF_00169"/>
    </source>
</evidence>
<keyword id="KW-0028">Amino-acid biosynthesis</keyword>
<keyword id="KW-0057">Aromatic amino acid biosynthesis</keyword>
<keyword id="KW-0456">Lyase</keyword>
<keyword id="KW-1185">Reference proteome</keyword>
<proteinExistence type="inferred from homology"/>
<accession>B3E9N5</accession>
<feature type="chain" id="PRO_1000097601" description="3-dehydroquinate dehydratase">
    <location>
        <begin position="1"/>
        <end position="144"/>
    </location>
</feature>
<feature type="active site" description="Proton acceptor" evidence="1">
    <location>
        <position position="22"/>
    </location>
</feature>
<feature type="active site" description="Proton donor" evidence="1">
    <location>
        <position position="99"/>
    </location>
</feature>
<feature type="binding site" evidence="1">
    <location>
        <position position="73"/>
    </location>
    <ligand>
        <name>substrate</name>
    </ligand>
</feature>
<feature type="binding site" evidence="1">
    <location>
        <position position="79"/>
    </location>
    <ligand>
        <name>substrate</name>
    </ligand>
</feature>
<feature type="binding site" evidence="1">
    <location>
        <position position="86"/>
    </location>
    <ligand>
        <name>substrate</name>
    </ligand>
</feature>
<feature type="binding site" evidence="1">
    <location>
        <begin position="100"/>
        <end position="101"/>
    </location>
    <ligand>
        <name>substrate</name>
    </ligand>
</feature>
<feature type="binding site" evidence="1">
    <location>
        <position position="110"/>
    </location>
    <ligand>
        <name>substrate</name>
    </ligand>
</feature>
<feature type="site" description="Transition state stabilizer" evidence="1">
    <location>
        <position position="17"/>
    </location>
</feature>
<organism>
    <name type="scientific">Trichlorobacter lovleyi (strain ATCC BAA-1151 / DSM 17278 / SZ)</name>
    <name type="common">Geobacter lovleyi</name>
    <dbReference type="NCBI Taxonomy" id="398767"/>
    <lineage>
        <taxon>Bacteria</taxon>
        <taxon>Pseudomonadati</taxon>
        <taxon>Thermodesulfobacteriota</taxon>
        <taxon>Desulfuromonadia</taxon>
        <taxon>Geobacterales</taxon>
        <taxon>Geobacteraceae</taxon>
        <taxon>Trichlorobacter</taxon>
    </lineage>
</organism>
<sequence length="144" mass="15778">MRILVLHGPNLNLLGKREPEIYGTLSLDDINGALEALGAEFESDLGFFQSNSEGALVDAIQQAPENYDGILINPAAYTHTSVALRDALAAIGLPFVEVHLSNIHRREEFRHHSYLAPLALGQICGFGLDSYLLGLRALFNHIKN</sequence>
<comment type="function">
    <text evidence="1">Catalyzes a trans-dehydration via an enolate intermediate.</text>
</comment>
<comment type="catalytic activity">
    <reaction evidence="1">
        <text>3-dehydroquinate = 3-dehydroshikimate + H2O</text>
        <dbReference type="Rhea" id="RHEA:21096"/>
        <dbReference type="ChEBI" id="CHEBI:15377"/>
        <dbReference type="ChEBI" id="CHEBI:16630"/>
        <dbReference type="ChEBI" id="CHEBI:32364"/>
        <dbReference type="EC" id="4.2.1.10"/>
    </reaction>
</comment>
<comment type="pathway">
    <text evidence="1">Metabolic intermediate biosynthesis; chorismate biosynthesis; chorismate from D-erythrose 4-phosphate and phosphoenolpyruvate: step 3/7.</text>
</comment>
<comment type="subunit">
    <text evidence="1">Homododecamer.</text>
</comment>
<comment type="similarity">
    <text evidence="1">Belongs to the type-II 3-dehydroquinase family.</text>
</comment>
<gene>
    <name evidence="1" type="primary">aroQ</name>
    <name type="ordered locus">Glov_1595</name>
</gene>
<protein>
    <recommendedName>
        <fullName evidence="1">3-dehydroquinate dehydratase</fullName>
        <shortName evidence="1">3-dehydroquinase</shortName>
        <ecNumber evidence="1">4.2.1.10</ecNumber>
    </recommendedName>
    <alternativeName>
        <fullName evidence="1">Type II DHQase</fullName>
    </alternativeName>
</protein>
<reference key="1">
    <citation type="submission" date="2008-05" db="EMBL/GenBank/DDBJ databases">
        <title>Complete sequence of chromosome of Geobacter lovleyi SZ.</title>
        <authorList>
            <consortium name="US DOE Joint Genome Institute"/>
            <person name="Lucas S."/>
            <person name="Copeland A."/>
            <person name="Lapidus A."/>
            <person name="Glavina del Rio T."/>
            <person name="Dalin E."/>
            <person name="Tice H."/>
            <person name="Bruce D."/>
            <person name="Goodwin L."/>
            <person name="Pitluck S."/>
            <person name="Chertkov O."/>
            <person name="Meincke L."/>
            <person name="Brettin T."/>
            <person name="Detter J.C."/>
            <person name="Han C."/>
            <person name="Tapia R."/>
            <person name="Kuske C.R."/>
            <person name="Schmutz J."/>
            <person name="Larimer F."/>
            <person name="Land M."/>
            <person name="Hauser L."/>
            <person name="Kyrpides N."/>
            <person name="Mikhailova N."/>
            <person name="Sung Y."/>
            <person name="Fletcher K.E."/>
            <person name="Ritalahti K.M."/>
            <person name="Loeffler F.E."/>
            <person name="Richardson P."/>
        </authorList>
    </citation>
    <scope>NUCLEOTIDE SEQUENCE [LARGE SCALE GENOMIC DNA]</scope>
    <source>
        <strain>ATCC BAA-1151 / DSM 17278 / SZ</strain>
    </source>
</reference>
<name>AROQ_TRIL1</name>
<dbReference type="EC" id="4.2.1.10" evidence="1"/>
<dbReference type="EMBL" id="CP001089">
    <property type="protein sequence ID" value="ACD95311.1"/>
    <property type="molecule type" value="Genomic_DNA"/>
</dbReference>
<dbReference type="RefSeq" id="WP_012469653.1">
    <property type="nucleotide sequence ID" value="NC_010814.1"/>
</dbReference>
<dbReference type="SMR" id="B3E9N5"/>
<dbReference type="STRING" id="398767.Glov_1595"/>
<dbReference type="KEGG" id="glo:Glov_1595"/>
<dbReference type="eggNOG" id="COG0757">
    <property type="taxonomic scope" value="Bacteria"/>
</dbReference>
<dbReference type="HOGENOM" id="CLU_090968_1_0_7"/>
<dbReference type="OrthoDB" id="9790793at2"/>
<dbReference type="UniPathway" id="UPA00053">
    <property type="reaction ID" value="UER00086"/>
</dbReference>
<dbReference type="Proteomes" id="UP000002420">
    <property type="component" value="Chromosome"/>
</dbReference>
<dbReference type="GO" id="GO:0003855">
    <property type="term" value="F:3-dehydroquinate dehydratase activity"/>
    <property type="evidence" value="ECO:0007669"/>
    <property type="project" value="UniProtKB-UniRule"/>
</dbReference>
<dbReference type="GO" id="GO:0008652">
    <property type="term" value="P:amino acid biosynthetic process"/>
    <property type="evidence" value="ECO:0007669"/>
    <property type="project" value="UniProtKB-KW"/>
</dbReference>
<dbReference type="GO" id="GO:0009073">
    <property type="term" value="P:aromatic amino acid family biosynthetic process"/>
    <property type="evidence" value="ECO:0007669"/>
    <property type="project" value="UniProtKB-KW"/>
</dbReference>
<dbReference type="GO" id="GO:0009423">
    <property type="term" value="P:chorismate biosynthetic process"/>
    <property type="evidence" value="ECO:0007669"/>
    <property type="project" value="UniProtKB-UniRule"/>
</dbReference>
<dbReference type="GO" id="GO:0019631">
    <property type="term" value="P:quinate catabolic process"/>
    <property type="evidence" value="ECO:0007669"/>
    <property type="project" value="TreeGrafter"/>
</dbReference>
<dbReference type="CDD" id="cd00466">
    <property type="entry name" value="DHQase_II"/>
    <property type="match status" value="1"/>
</dbReference>
<dbReference type="Gene3D" id="3.40.50.9100">
    <property type="entry name" value="Dehydroquinase, class II"/>
    <property type="match status" value="1"/>
</dbReference>
<dbReference type="HAMAP" id="MF_00169">
    <property type="entry name" value="AroQ"/>
    <property type="match status" value="1"/>
</dbReference>
<dbReference type="InterPro" id="IPR001874">
    <property type="entry name" value="DHquinase_II"/>
</dbReference>
<dbReference type="InterPro" id="IPR018509">
    <property type="entry name" value="DHquinase_II_CS"/>
</dbReference>
<dbReference type="InterPro" id="IPR036441">
    <property type="entry name" value="DHquinase_II_sf"/>
</dbReference>
<dbReference type="NCBIfam" id="TIGR01088">
    <property type="entry name" value="aroQ"/>
    <property type="match status" value="1"/>
</dbReference>
<dbReference type="NCBIfam" id="NF003804">
    <property type="entry name" value="PRK05395.1-1"/>
    <property type="match status" value="1"/>
</dbReference>
<dbReference type="NCBIfam" id="NF003805">
    <property type="entry name" value="PRK05395.1-2"/>
    <property type="match status" value="1"/>
</dbReference>
<dbReference type="NCBIfam" id="NF003806">
    <property type="entry name" value="PRK05395.1-3"/>
    <property type="match status" value="1"/>
</dbReference>
<dbReference type="NCBIfam" id="NF003807">
    <property type="entry name" value="PRK05395.1-4"/>
    <property type="match status" value="1"/>
</dbReference>
<dbReference type="PANTHER" id="PTHR21272">
    <property type="entry name" value="CATABOLIC 3-DEHYDROQUINASE"/>
    <property type="match status" value="1"/>
</dbReference>
<dbReference type="PANTHER" id="PTHR21272:SF3">
    <property type="entry name" value="CATABOLIC 3-DEHYDROQUINASE"/>
    <property type="match status" value="1"/>
</dbReference>
<dbReference type="Pfam" id="PF01220">
    <property type="entry name" value="DHquinase_II"/>
    <property type="match status" value="1"/>
</dbReference>
<dbReference type="PIRSF" id="PIRSF001399">
    <property type="entry name" value="DHquinase_II"/>
    <property type="match status" value="1"/>
</dbReference>
<dbReference type="SUPFAM" id="SSF52304">
    <property type="entry name" value="Type II 3-dehydroquinate dehydratase"/>
    <property type="match status" value="1"/>
</dbReference>
<dbReference type="PROSITE" id="PS01029">
    <property type="entry name" value="DEHYDROQUINASE_II"/>
    <property type="match status" value="1"/>
</dbReference>